<gene>
    <name evidence="1" type="primary">rpmG</name>
    <name type="ordered locus">ETA_00680</name>
</gene>
<protein>
    <recommendedName>
        <fullName evidence="1">Large ribosomal subunit protein bL33</fullName>
    </recommendedName>
    <alternativeName>
        <fullName evidence="2">50S ribosomal protein L33</fullName>
    </alternativeName>
</protein>
<keyword id="KW-1185">Reference proteome</keyword>
<keyword id="KW-0687">Ribonucleoprotein</keyword>
<keyword id="KW-0689">Ribosomal protein</keyword>
<dbReference type="EMBL" id="CU468135">
    <property type="protein sequence ID" value="CAO95114.1"/>
    <property type="molecule type" value="Genomic_DNA"/>
</dbReference>
<dbReference type="RefSeq" id="WP_001051798.1">
    <property type="nucleotide sequence ID" value="NC_010694.1"/>
</dbReference>
<dbReference type="SMR" id="B2VF69"/>
<dbReference type="STRING" id="465817.ETA_00680"/>
<dbReference type="GeneID" id="97607673"/>
<dbReference type="KEGG" id="eta:ETA_00680"/>
<dbReference type="eggNOG" id="COG0267">
    <property type="taxonomic scope" value="Bacteria"/>
</dbReference>
<dbReference type="HOGENOM" id="CLU_190949_1_1_6"/>
<dbReference type="OrthoDB" id="21586at2"/>
<dbReference type="Proteomes" id="UP000001726">
    <property type="component" value="Chromosome"/>
</dbReference>
<dbReference type="GO" id="GO:0022625">
    <property type="term" value="C:cytosolic large ribosomal subunit"/>
    <property type="evidence" value="ECO:0007669"/>
    <property type="project" value="TreeGrafter"/>
</dbReference>
<dbReference type="GO" id="GO:0003735">
    <property type="term" value="F:structural constituent of ribosome"/>
    <property type="evidence" value="ECO:0007669"/>
    <property type="project" value="InterPro"/>
</dbReference>
<dbReference type="GO" id="GO:0006412">
    <property type="term" value="P:translation"/>
    <property type="evidence" value="ECO:0007669"/>
    <property type="project" value="UniProtKB-UniRule"/>
</dbReference>
<dbReference type="FunFam" id="2.20.28.120:FF:000001">
    <property type="entry name" value="50S ribosomal protein L33"/>
    <property type="match status" value="1"/>
</dbReference>
<dbReference type="Gene3D" id="2.20.28.120">
    <property type="entry name" value="Ribosomal protein L33"/>
    <property type="match status" value="1"/>
</dbReference>
<dbReference type="HAMAP" id="MF_00294">
    <property type="entry name" value="Ribosomal_bL33"/>
    <property type="match status" value="1"/>
</dbReference>
<dbReference type="InterPro" id="IPR001705">
    <property type="entry name" value="Ribosomal_bL33"/>
</dbReference>
<dbReference type="InterPro" id="IPR018264">
    <property type="entry name" value="Ribosomal_bL33_CS"/>
</dbReference>
<dbReference type="InterPro" id="IPR038584">
    <property type="entry name" value="Ribosomal_bL33_sf"/>
</dbReference>
<dbReference type="InterPro" id="IPR011332">
    <property type="entry name" value="Ribosomal_zn-bd"/>
</dbReference>
<dbReference type="NCBIfam" id="NF001860">
    <property type="entry name" value="PRK00595.1"/>
    <property type="match status" value="1"/>
</dbReference>
<dbReference type="NCBIfam" id="TIGR01023">
    <property type="entry name" value="rpmG_bact"/>
    <property type="match status" value="1"/>
</dbReference>
<dbReference type="PANTHER" id="PTHR15238">
    <property type="entry name" value="54S RIBOSOMAL PROTEIN L39, MITOCHONDRIAL"/>
    <property type="match status" value="1"/>
</dbReference>
<dbReference type="PANTHER" id="PTHR15238:SF1">
    <property type="entry name" value="LARGE RIBOSOMAL SUBUNIT PROTEIN BL33M"/>
    <property type="match status" value="1"/>
</dbReference>
<dbReference type="Pfam" id="PF00471">
    <property type="entry name" value="Ribosomal_L33"/>
    <property type="match status" value="1"/>
</dbReference>
<dbReference type="SUPFAM" id="SSF57829">
    <property type="entry name" value="Zn-binding ribosomal proteins"/>
    <property type="match status" value="1"/>
</dbReference>
<dbReference type="PROSITE" id="PS00582">
    <property type="entry name" value="RIBOSOMAL_L33"/>
    <property type="match status" value="1"/>
</dbReference>
<evidence type="ECO:0000255" key="1">
    <source>
        <dbReference type="HAMAP-Rule" id="MF_00294"/>
    </source>
</evidence>
<evidence type="ECO:0000305" key="2"/>
<comment type="similarity">
    <text evidence="1">Belongs to the bacterial ribosomal protein bL33 family.</text>
</comment>
<name>RL33_ERWT9</name>
<sequence>MAKGIREKIKLVSSAGTGHFYTTTKNKRTKPEKLELKKFDPVVRQHVIYKEAKIK</sequence>
<proteinExistence type="inferred from homology"/>
<accession>B2VF69</accession>
<organism>
    <name type="scientific">Erwinia tasmaniensis (strain DSM 17950 / CFBP 7177 / CIP 109463 / NCPPB 4357 / Et1/99)</name>
    <dbReference type="NCBI Taxonomy" id="465817"/>
    <lineage>
        <taxon>Bacteria</taxon>
        <taxon>Pseudomonadati</taxon>
        <taxon>Pseudomonadota</taxon>
        <taxon>Gammaproteobacteria</taxon>
        <taxon>Enterobacterales</taxon>
        <taxon>Erwiniaceae</taxon>
        <taxon>Erwinia</taxon>
    </lineage>
</organism>
<feature type="chain" id="PRO_1000115132" description="Large ribosomal subunit protein bL33">
    <location>
        <begin position="1"/>
        <end position="55"/>
    </location>
</feature>
<reference key="1">
    <citation type="journal article" date="2008" name="Environ. Microbiol.">
        <title>The genome of Erwinia tasmaniensis strain Et1/99, a non-pathogenic bacterium in the genus Erwinia.</title>
        <authorList>
            <person name="Kube M."/>
            <person name="Migdoll A.M."/>
            <person name="Mueller I."/>
            <person name="Kuhl H."/>
            <person name="Beck A."/>
            <person name="Reinhardt R."/>
            <person name="Geider K."/>
        </authorList>
    </citation>
    <scope>NUCLEOTIDE SEQUENCE [LARGE SCALE GENOMIC DNA]</scope>
    <source>
        <strain>DSM 17950 / CFBP 7177 / CIP 109463 / NCPPB 4357 / Et1/99</strain>
    </source>
</reference>